<dbReference type="EC" id="2.7.11.1"/>
<dbReference type="EMBL" id="AB023043">
    <property type="protein sequence ID" value="BAB08753.1"/>
    <property type="status" value="ALT_SEQ"/>
    <property type="molecule type" value="Genomic_DNA"/>
</dbReference>
<dbReference type="EMBL" id="CP002688">
    <property type="protein sequence ID" value="AED96649.1"/>
    <property type="molecule type" value="Genomic_DNA"/>
</dbReference>
<dbReference type="EMBL" id="BT014907">
    <property type="protein sequence ID" value="AAT46036.1"/>
    <property type="molecule type" value="mRNA"/>
</dbReference>
<dbReference type="EMBL" id="BT015030">
    <property type="protein sequence ID" value="AAT70481.1"/>
    <property type="molecule type" value="mRNA"/>
</dbReference>
<dbReference type="RefSeq" id="NP_200367.2">
    <property type="nucleotide sequence ID" value="NM_124938.5"/>
</dbReference>
<dbReference type="SMR" id="Q6ICW6"/>
<dbReference type="BioGRID" id="20894">
    <property type="interactions" value="3"/>
</dbReference>
<dbReference type="FunCoup" id="Q6ICW6">
    <property type="interactions" value="1675"/>
</dbReference>
<dbReference type="STRING" id="3702.Q6ICW6"/>
<dbReference type="iPTMnet" id="Q6ICW6"/>
<dbReference type="PaxDb" id="3702-AT5G55560.1"/>
<dbReference type="ProteomicsDB" id="242722"/>
<dbReference type="EnsemblPlants" id="AT5G55560.1">
    <property type="protein sequence ID" value="AT5G55560.1"/>
    <property type="gene ID" value="AT5G55560"/>
</dbReference>
<dbReference type="GeneID" id="835650"/>
<dbReference type="Gramene" id="AT5G55560.1">
    <property type="protein sequence ID" value="AT5G55560.1"/>
    <property type="gene ID" value="AT5G55560"/>
</dbReference>
<dbReference type="KEGG" id="ath:AT5G55560"/>
<dbReference type="Araport" id="AT5G55560"/>
<dbReference type="TAIR" id="AT5G55560"/>
<dbReference type="eggNOG" id="KOG0584">
    <property type="taxonomic scope" value="Eukaryota"/>
</dbReference>
<dbReference type="HOGENOM" id="CLU_000288_63_23_1"/>
<dbReference type="InParanoid" id="Q6ICW6"/>
<dbReference type="OMA" id="YRKVTNV"/>
<dbReference type="OrthoDB" id="4062651at2759"/>
<dbReference type="PhylomeDB" id="Q6ICW6"/>
<dbReference type="PRO" id="PR:Q6ICW6"/>
<dbReference type="Proteomes" id="UP000006548">
    <property type="component" value="Chromosome 5"/>
</dbReference>
<dbReference type="ExpressionAtlas" id="Q6ICW6">
    <property type="expression patterns" value="baseline and differential"/>
</dbReference>
<dbReference type="GO" id="GO:0005524">
    <property type="term" value="F:ATP binding"/>
    <property type="evidence" value="ECO:0007669"/>
    <property type="project" value="UniProtKB-KW"/>
</dbReference>
<dbReference type="GO" id="GO:0106310">
    <property type="term" value="F:protein serine kinase activity"/>
    <property type="evidence" value="ECO:0007669"/>
    <property type="project" value="RHEA"/>
</dbReference>
<dbReference type="GO" id="GO:0004674">
    <property type="term" value="F:protein serine/threonine kinase activity"/>
    <property type="evidence" value="ECO:0007669"/>
    <property type="project" value="UniProtKB-KW"/>
</dbReference>
<dbReference type="CDD" id="cd13983">
    <property type="entry name" value="STKc_WNK"/>
    <property type="match status" value="1"/>
</dbReference>
<dbReference type="FunFam" id="3.30.200.20:FF:000075">
    <property type="entry name" value="Probable serine/threonine-protein kinase WNK1"/>
    <property type="match status" value="1"/>
</dbReference>
<dbReference type="FunFam" id="1.10.510.10:FF:000046">
    <property type="entry name" value="probable serine/threonine-protein kinase WNK9"/>
    <property type="match status" value="1"/>
</dbReference>
<dbReference type="Gene3D" id="3.30.200.20">
    <property type="entry name" value="Phosphorylase Kinase, domain 1"/>
    <property type="match status" value="1"/>
</dbReference>
<dbReference type="Gene3D" id="1.10.510.10">
    <property type="entry name" value="Transferase(Phosphotransferase) domain 1"/>
    <property type="match status" value="1"/>
</dbReference>
<dbReference type="InterPro" id="IPR011009">
    <property type="entry name" value="Kinase-like_dom_sf"/>
</dbReference>
<dbReference type="InterPro" id="IPR000719">
    <property type="entry name" value="Prot_kinase_dom"/>
</dbReference>
<dbReference type="InterPro" id="IPR050588">
    <property type="entry name" value="WNK_Ser-Thr_kinase"/>
</dbReference>
<dbReference type="PANTHER" id="PTHR13902">
    <property type="entry name" value="SERINE/THREONINE-PROTEIN KINASE WNK WITH NO LYSINE -RELATED"/>
    <property type="match status" value="1"/>
</dbReference>
<dbReference type="Pfam" id="PF00069">
    <property type="entry name" value="Pkinase"/>
    <property type="match status" value="1"/>
</dbReference>
<dbReference type="SUPFAM" id="SSF56112">
    <property type="entry name" value="Protein kinase-like (PK-like)"/>
    <property type="match status" value="1"/>
</dbReference>
<dbReference type="PROSITE" id="PS50011">
    <property type="entry name" value="PROTEIN_KINASE_DOM"/>
    <property type="match status" value="1"/>
</dbReference>
<sequence>MMTCASSDDNESEKDKDSESFVEVDPTGRYGRYGELLGSGAVKKVYRAFDQEEGIEVAWNQVKLRCFSDDPAMTERLYSEVRLLKNLKNSNIITLYKVWRDERNNTLNFITEICTSGNLREYRKKHRHVSMRALKKWSKQILKGLDYLHTHDPCIIHRDLNCSNIFVNGNIGQVKIGDLGLAAIVGKNHLAHSILGTPEFMAPELYEENYTEMVDIYSYGMCVLELVSLEIPYSECDSVAKIYKRVSKGLKPEALNKVNDPEAKAFIEKCIAQPRARPSAAELLCDPFFDGILDDDDEDGENNDNNGAGRIVVS</sequence>
<keyword id="KW-0067">ATP-binding</keyword>
<keyword id="KW-0418">Kinase</keyword>
<keyword id="KW-0547">Nucleotide-binding</keyword>
<keyword id="KW-1185">Reference proteome</keyword>
<keyword id="KW-0723">Serine/threonine-protein kinase</keyword>
<keyword id="KW-0808">Transferase</keyword>
<name>WNK11_ARATH</name>
<feature type="chain" id="PRO_0000351669" description="Probable serine/threonine-protein kinase WNK11">
    <location>
        <begin position="1"/>
        <end position="314"/>
    </location>
</feature>
<feature type="domain" description="Protein kinase" evidence="4">
    <location>
        <begin position="31"/>
        <end position="289"/>
    </location>
</feature>
<feature type="region of interest" description="Disordered" evidence="5">
    <location>
        <begin position="1"/>
        <end position="22"/>
    </location>
</feature>
<feature type="region of interest" description="Disordered" evidence="5">
    <location>
        <begin position="295"/>
        <end position="314"/>
    </location>
</feature>
<feature type="active site" description="Proton acceptor" evidence="3">
    <location>
        <position position="178"/>
    </location>
</feature>
<feature type="binding site" evidence="2">
    <location>
        <begin position="111"/>
        <end position="114"/>
    </location>
    <ligand>
        <name>ATP</name>
        <dbReference type="ChEBI" id="CHEBI:30616"/>
    </ligand>
</feature>
<protein>
    <recommendedName>
        <fullName>Probable serine/threonine-protein kinase WNK11</fullName>
        <shortName>AtWNK11</shortName>
        <ecNumber>2.7.11.1</ecNumber>
    </recommendedName>
    <alternativeName>
        <fullName>Protein kinase with no lysine 11</fullName>
    </alternativeName>
</protein>
<gene>
    <name type="primary">WNK11</name>
    <name type="ordered locus">At5g55560</name>
    <name type="ORF">MWC10.1</name>
</gene>
<evidence type="ECO:0000250" key="1"/>
<evidence type="ECO:0000250" key="2">
    <source>
        <dbReference type="UniProtKB" id="Q9H4A3"/>
    </source>
</evidence>
<evidence type="ECO:0000250" key="3">
    <source>
        <dbReference type="UniProtKB" id="Q9JIH7"/>
    </source>
</evidence>
<evidence type="ECO:0000255" key="4">
    <source>
        <dbReference type="PROSITE-ProRule" id="PRU00159"/>
    </source>
</evidence>
<evidence type="ECO:0000256" key="5">
    <source>
        <dbReference type="SAM" id="MobiDB-lite"/>
    </source>
</evidence>
<evidence type="ECO:0000305" key="6"/>
<reference key="1">
    <citation type="submission" date="1999-02" db="EMBL/GenBank/DDBJ databases">
        <title>Structural analysis of Arabidopsis thaliana chromosome 5. XI.</title>
        <authorList>
            <person name="Kaneko T."/>
            <person name="Katoh T."/>
            <person name="Asamizu E."/>
            <person name="Sato S."/>
            <person name="Nakamura Y."/>
            <person name="Kotani H."/>
            <person name="Tabata S."/>
        </authorList>
    </citation>
    <scope>NUCLEOTIDE SEQUENCE [LARGE SCALE GENOMIC DNA]</scope>
    <source>
        <strain>cv. Columbia</strain>
    </source>
</reference>
<reference key="2">
    <citation type="journal article" date="2017" name="Plant J.">
        <title>Araport11: a complete reannotation of the Arabidopsis thaliana reference genome.</title>
        <authorList>
            <person name="Cheng C.Y."/>
            <person name="Krishnakumar V."/>
            <person name="Chan A.P."/>
            <person name="Thibaud-Nissen F."/>
            <person name="Schobel S."/>
            <person name="Town C.D."/>
        </authorList>
    </citation>
    <scope>GENOME REANNOTATION</scope>
    <source>
        <strain>cv. Columbia</strain>
    </source>
</reference>
<reference key="3">
    <citation type="submission" date="2004-07" db="EMBL/GenBank/DDBJ databases">
        <title>Arabidopsis ORF clones.</title>
        <authorList>
            <person name="Shinn P."/>
            <person name="Chen H."/>
            <person name="Cheuk R.F."/>
            <person name="Kim C.J."/>
            <person name="Ecker J.R."/>
        </authorList>
    </citation>
    <scope>NUCLEOTIDE SEQUENCE [LARGE SCALE MRNA]</scope>
    <source>
        <strain>cv. Columbia</strain>
    </source>
</reference>
<organism>
    <name type="scientific">Arabidopsis thaliana</name>
    <name type="common">Mouse-ear cress</name>
    <dbReference type="NCBI Taxonomy" id="3702"/>
    <lineage>
        <taxon>Eukaryota</taxon>
        <taxon>Viridiplantae</taxon>
        <taxon>Streptophyta</taxon>
        <taxon>Embryophyta</taxon>
        <taxon>Tracheophyta</taxon>
        <taxon>Spermatophyta</taxon>
        <taxon>Magnoliopsida</taxon>
        <taxon>eudicotyledons</taxon>
        <taxon>Gunneridae</taxon>
        <taxon>Pentapetalae</taxon>
        <taxon>rosids</taxon>
        <taxon>malvids</taxon>
        <taxon>Brassicales</taxon>
        <taxon>Brassicaceae</taxon>
        <taxon>Camelineae</taxon>
        <taxon>Arabidopsis</taxon>
    </lineage>
</organism>
<accession>Q6ICW6</accession>
<accession>Q9FGV9</accession>
<proteinExistence type="evidence at transcript level"/>
<comment type="function">
    <text evidence="1">May regulate flowering time by modulating the photoperiod pathway.</text>
</comment>
<comment type="catalytic activity">
    <reaction>
        <text>L-seryl-[protein] + ATP = O-phospho-L-seryl-[protein] + ADP + H(+)</text>
        <dbReference type="Rhea" id="RHEA:17989"/>
        <dbReference type="Rhea" id="RHEA-COMP:9863"/>
        <dbReference type="Rhea" id="RHEA-COMP:11604"/>
        <dbReference type="ChEBI" id="CHEBI:15378"/>
        <dbReference type="ChEBI" id="CHEBI:29999"/>
        <dbReference type="ChEBI" id="CHEBI:30616"/>
        <dbReference type="ChEBI" id="CHEBI:83421"/>
        <dbReference type="ChEBI" id="CHEBI:456216"/>
        <dbReference type="EC" id="2.7.11.1"/>
    </reaction>
</comment>
<comment type="catalytic activity">
    <reaction>
        <text>L-threonyl-[protein] + ATP = O-phospho-L-threonyl-[protein] + ADP + H(+)</text>
        <dbReference type="Rhea" id="RHEA:46608"/>
        <dbReference type="Rhea" id="RHEA-COMP:11060"/>
        <dbReference type="Rhea" id="RHEA-COMP:11605"/>
        <dbReference type="ChEBI" id="CHEBI:15378"/>
        <dbReference type="ChEBI" id="CHEBI:30013"/>
        <dbReference type="ChEBI" id="CHEBI:30616"/>
        <dbReference type="ChEBI" id="CHEBI:61977"/>
        <dbReference type="ChEBI" id="CHEBI:456216"/>
        <dbReference type="EC" id="2.7.11.1"/>
    </reaction>
</comment>
<comment type="similarity">
    <text evidence="4">Belongs to the protein kinase superfamily. Ser/Thr protein kinase family. WNK subfamily.</text>
</comment>
<comment type="caution">
    <text evidence="2">Was named WNK/'with no lysine(K)' because key residues for catalysis, including the lysine involved in ATP binding, are either not conserved or differ compared to the residues described in other kinase family proteins.</text>
</comment>
<comment type="sequence caution" evidence="6">
    <conflict type="erroneous gene model prediction">
        <sequence resource="EMBL-CDS" id="BAB08753"/>
    </conflict>
</comment>